<sequence length="125" mass="12755">MADLQKIVDDLSSLTVLEAAELAKLLEEKWGVSAAAAVAVAAAPGAAAGGAPAEEKTEFQVVLAAAGDKKIEVIKEVRAITGLGLKEAKDLVEGAPKPLKEGVAKDEAEKIKAALEKAGAKVELK</sequence>
<name>RL7_AFIC5</name>
<dbReference type="EMBL" id="CP001196">
    <property type="protein sequence ID" value="ACI92790.1"/>
    <property type="molecule type" value="Genomic_DNA"/>
</dbReference>
<dbReference type="EMBL" id="CP002826">
    <property type="protein sequence ID" value="AEI07043.1"/>
    <property type="molecule type" value="Genomic_DNA"/>
</dbReference>
<dbReference type="RefSeq" id="WP_012562819.1">
    <property type="nucleotide sequence ID" value="NC_015684.1"/>
</dbReference>
<dbReference type="SMR" id="B6JER8"/>
<dbReference type="STRING" id="504832.OCA5_c23430"/>
<dbReference type="KEGG" id="oca:OCAR_5662"/>
<dbReference type="KEGG" id="ocg:OCA5_c23430"/>
<dbReference type="PATRIC" id="fig|504832.7.peg.2470"/>
<dbReference type="eggNOG" id="COG0222">
    <property type="taxonomic scope" value="Bacteria"/>
</dbReference>
<dbReference type="HOGENOM" id="CLU_086499_3_0_5"/>
<dbReference type="OrthoDB" id="9811748at2"/>
<dbReference type="Proteomes" id="UP000007730">
    <property type="component" value="Chromosome"/>
</dbReference>
<dbReference type="GO" id="GO:0022625">
    <property type="term" value="C:cytosolic large ribosomal subunit"/>
    <property type="evidence" value="ECO:0007669"/>
    <property type="project" value="TreeGrafter"/>
</dbReference>
<dbReference type="GO" id="GO:0003729">
    <property type="term" value="F:mRNA binding"/>
    <property type="evidence" value="ECO:0007669"/>
    <property type="project" value="TreeGrafter"/>
</dbReference>
<dbReference type="GO" id="GO:0003735">
    <property type="term" value="F:structural constituent of ribosome"/>
    <property type="evidence" value="ECO:0007669"/>
    <property type="project" value="InterPro"/>
</dbReference>
<dbReference type="GO" id="GO:0006412">
    <property type="term" value="P:translation"/>
    <property type="evidence" value="ECO:0007669"/>
    <property type="project" value="UniProtKB-UniRule"/>
</dbReference>
<dbReference type="CDD" id="cd00387">
    <property type="entry name" value="Ribosomal_L7_L12"/>
    <property type="match status" value="1"/>
</dbReference>
<dbReference type="FunFam" id="1.20.5.710:FF:000007">
    <property type="entry name" value="50S ribosomal protein L7/L12"/>
    <property type="match status" value="1"/>
</dbReference>
<dbReference type="FunFam" id="3.30.1390.10:FF:000001">
    <property type="entry name" value="50S ribosomal protein L7/L12"/>
    <property type="match status" value="1"/>
</dbReference>
<dbReference type="Gene3D" id="3.30.1390.10">
    <property type="match status" value="1"/>
</dbReference>
<dbReference type="Gene3D" id="1.20.5.710">
    <property type="entry name" value="Single helix bin"/>
    <property type="match status" value="1"/>
</dbReference>
<dbReference type="HAMAP" id="MF_00368">
    <property type="entry name" value="Ribosomal_bL12"/>
    <property type="match status" value="1"/>
</dbReference>
<dbReference type="InterPro" id="IPR000206">
    <property type="entry name" value="Ribosomal_bL12"/>
</dbReference>
<dbReference type="InterPro" id="IPR013823">
    <property type="entry name" value="Ribosomal_bL12_C"/>
</dbReference>
<dbReference type="InterPro" id="IPR014719">
    <property type="entry name" value="Ribosomal_bL12_C/ClpS-like"/>
</dbReference>
<dbReference type="InterPro" id="IPR008932">
    <property type="entry name" value="Ribosomal_bL12_oligo"/>
</dbReference>
<dbReference type="InterPro" id="IPR036235">
    <property type="entry name" value="Ribosomal_bL12_oligo_N_sf"/>
</dbReference>
<dbReference type="NCBIfam" id="TIGR00855">
    <property type="entry name" value="L12"/>
    <property type="match status" value="1"/>
</dbReference>
<dbReference type="PANTHER" id="PTHR45987">
    <property type="entry name" value="39S RIBOSOMAL PROTEIN L12"/>
    <property type="match status" value="1"/>
</dbReference>
<dbReference type="PANTHER" id="PTHR45987:SF4">
    <property type="entry name" value="LARGE RIBOSOMAL SUBUNIT PROTEIN BL12M"/>
    <property type="match status" value="1"/>
</dbReference>
<dbReference type="Pfam" id="PF00542">
    <property type="entry name" value="Ribosomal_L12"/>
    <property type="match status" value="1"/>
</dbReference>
<dbReference type="Pfam" id="PF16320">
    <property type="entry name" value="Ribosomal_L12_N"/>
    <property type="match status" value="1"/>
</dbReference>
<dbReference type="SUPFAM" id="SSF54736">
    <property type="entry name" value="ClpS-like"/>
    <property type="match status" value="1"/>
</dbReference>
<dbReference type="SUPFAM" id="SSF48300">
    <property type="entry name" value="Ribosomal protein L7/12, oligomerisation (N-terminal) domain"/>
    <property type="match status" value="1"/>
</dbReference>
<protein>
    <recommendedName>
        <fullName evidence="1">Large ribosomal subunit protein bL12</fullName>
    </recommendedName>
    <alternativeName>
        <fullName evidence="2">50S ribosomal protein L7/L12</fullName>
    </alternativeName>
</protein>
<reference key="1">
    <citation type="journal article" date="2008" name="J. Bacteriol.">
        <title>Genome sequence of the chemolithoautotrophic bacterium Oligotropha carboxidovorans OM5T.</title>
        <authorList>
            <person name="Paul D."/>
            <person name="Bridges S."/>
            <person name="Burgess S.C."/>
            <person name="Dandass Y."/>
            <person name="Lawrence M.L."/>
        </authorList>
    </citation>
    <scope>NUCLEOTIDE SEQUENCE [LARGE SCALE GENOMIC DNA]</scope>
    <source>
        <strain>ATCC 49405 / DSM 1227 / KCTC 32145 / OM5</strain>
    </source>
</reference>
<reference key="2">
    <citation type="journal article" date="2011" name="J. Bacteriol.">
        <title>Complete genome sequences of the chemolithoautotrophic Oligotropha carboxidovorans strains OM4 and OM5.</title>
        <authorList>
            <person name="Volland S."/>
            <person name="Rachinger M."/>
            <person name="Strittmatter A."/>
            <person name="Daniel R."/>
            <person name="Gottschalk G."/>
            <person name="Meyer O."/>
        </authorList>
    </citation>
    <scope>NUCLEOTIDE SEQUENCE [LARGE SCALE GENOMIC DNA]</scope>
    <source>
        <strain>ATCC 49405 / DSM 1227 / KCTC 32145 / OM5</strain>
    </source>
</reference>
<comment type="function">
    <text evidence="1">Forms part of the ribosomal stalk which helps the ribosome interact with GTP-bound translation factors. Is thus essential for accurate translation.</text>
</comment>
<comment type="subunit">
    <text evidence="1">Homodimer. Part of the ribosomal stalk of the 50S ribosomal subunit. Forms a multimeric L10(L12)X complex, where L10 forms an elongated spine to which 2 to 4 L12 dimers bind in a sequential fashion. Binds GTP-bound translation factors.</text>
</comment>
<comment type="similarity">
    <text evidence="1">Belongs to the bacterial ribosomal protein bL12 family.</text>
</comment>
<organism>
    <name type="scientific">Afipia carboxidovorans (strain ATCC 49405 / DSM 1227 / KCTC 32145 / OM5)</name>
    <name type="common">Oligotropha carboxidovorans</name>
    <dbReference type="NCBI Taxonomy" id="504832"/>
    <lineage>
        <taxon>Bacteria</taxon>
        <taxon>Pseudomonadati</taxon>
        <taxon>Pseudomonadota</taxon>
        <taxon>Alphaproteobacteria</taxon>
        <taxon>Hyphomicrobiales</taxon>
        <taxon>Nitrobacteraceae</taxon>
        <taxon>Afipia</taxon>
    </lineage>
</organism>
<proteinExistence type="inferred from homology"/>
<keyword id="KW-1185">Reference proteome</keyword>
<keyword id="KW-0687">Ribonucleoprotein</keyword>
<keyword id="KW-0689">Ribosomal protein</keyword>
<gene>
    <name evidence="1" type="primary">rplL</name>
    <name type="ordered locus">OCAR_5662</name>
    <name type="ordered locus">OCA5_c23430</name>
</gene>
<accession>B6JER8</accession>
<accession>F8BZE0</accession>
<evidence type="ECO:0000255" key="1">
    <source>
        <dbReference type="HAMAP-Rule" id="MF_00368"/>
    </source>
</evidence>
<evidence type="ECO:0000305" key="2"/>
<feature type="chain" id="PRO_1000121465" description="Large ribosomal subunit protein bL12">
    <location>
        <begin position="1"/>
        <end position="125"/>
    </location>
</feature>